<keyword id="KW-0963">Cytoplasm</keyword>
<keyword id="KW-0479">Metal-binding</keyword>
<keyword id="KW-0862">Zinc</keyword>
<name>SPRTL_STRA1</name>
<comment type="cofactor">
    <cofactor evidence="1">
        <name>Zn(2+)</name>
        <dbReference type="ChEBI" id="CHEBI:29105"/>
    </cofactor>
    <text evidence="1">Binds 1 zinc ion.</text>
</comment>
<comment type="subcellular location">
    <subcellularLocation>
        <location evidence="1">Cytoplasm</location>
    </subcellularLocation>
</comment>
<comment type="similarity">
    <text evidence="1">Belongs to the SprT family.</text>
</comment>
<gene>
    <name type="ordered locus">SAK_0859</name>
</gene>
<organism>
    <name type="scientific">Streptococcus agalactiae serotype Ia (strain ATCC 27591 / A909 / CDC SS700)</name>
    <dbReference type="NCBI Taxonomy" id="205921"/>
    <lineage>
        <taxon>Bacteria</taxon>
        <taxon>Bacillati</taxon>
        <taxon>Bacillota</taxon>
        <taxon>Bacilli</taxon>
        <taxon>Lactobacillales</taxon>
        <taxon>Streptococcaceae</taxon>
        <taxon>Streptococcus</taxon>
    </lineage>
</organism>
<sequence>MTNYVKKVSIEDFGCQFLHTAHWNNRLRTTGGRFFPNDRHLDFNPKIYREFGIDIFRKIVRHELCHYHLYIQGKGYQHRDKAFKELLEKVDGLRYTPRVTAVKVNYHHYSCQSCGQVYRRRRRVNLRKFACGYCHGRLIESF</sequence>
<proteinExistence type="inferred from homology"/>
<accession>Q3K1X2</accession>
<feature type="chain" id="PRO_1000046517" description="Protein SprT-like">
    <location>
        <begin position="1"/>
        <end position="142"/>
    </location>
</feature>
<feature type="domain" description="SprT-like" evidence="1">
    <location>
        <begin position="4"/>
        <end position="138"/>
    </location>
</feature>
<feature type="active site" evidence="1">
    <location>
        <position position="63"/>
    </location>
</feature>
<feature type="binding site" evidence="1">
    <location>
        <position position="62"/>
    </location>
    <ligand>
        <name>Zn(2+)</name>
        <dbReference type="ChEBI" id="CHEBI:29105"/>
    </ligand>
</feature>
<feature type="binding site" evidence="1">
    <location>
        <position position="66"/>
    </location>
    <ligand>
        <name>Zn(2+)</name>
        <dbReference type="ChEBI" id="CHEBI:29105"/>
    </ligand>
</feature>
<evidence type="ECO:0000255" key="1">
    <source>
        <dbReference type="HAMAP-Rule" id="MF_00745"/>
    </source>
</evidence>
<reference key="1">
    <citation type="journal article" date="2005" name="Proc. Natl. Acad. Sci. U.S.A.">
        <title>Genome analysis of multiple pathogenic isolates of Streptococcus agalactiae: implications for the microbial 'pan-genome'.</title>
        <authorList>
            <person name="Tettelin H."/>
            <person name="Masignani V."/>
            <person name="Cieslewicz M.J."/>
            <person name="Donati C."/>
            <person name="Medini D."/>
            <person name="Ward N.L."/>
            <person name="Angiuoli S.V."/>
            <person name="Crabtree J."/>
            <person name="Jones A.L."/>
            <person name="Durkin A.S."/>
            <person name="DeBoy R.T."/>
            <person name="Davidsen T.M."/>
            <person name="Mora M."/>
            <person name="Scarselli M."/>
            <person name="Margarit y Ros I."/>
            <person name="Peterson J.D."/>
            <person name="Hauser C.R."/>
            <person name="Sundaram J.P."/>
            <person name="Nelson W.C."/>
            <person name="Madupu R."/>
            <person name="Brinkac L.M."/>
            <person name="Dodson R.J."/>
            <person name="Rosovitz M.J."/>
            <person name="Sullivan S.A."/>
            <person name="Daugherty S.C."/>
            <person name="Haft D.H."/>
            <person name="Selengut J."/>
            <person name="Gwinn M.L."/>
            <person name="Zhou L."/>
            <person name="Zafar N."/>
            <person name="Khouri H."/>
            <person name="Radune D."/>
            <person name="Dimitrov G."/>
            <person name="Watkins K."/>
            <person name="O'Connor K.J."/>
            <person name="Smith S."/>
            <person name="Utterback T.R."/>
            <person name="White O."/>
            <person name="Rubens C.E."/>
            <person name="Grandi G."/>
            <person name="Madoff L.C."/>
            <person name="Kasper D.L."/>
            <person name="Telford J.L."/>
            <person name="Wessels M.R."/>
            <person name="Rappuoli R."/>
            <person name="Fraser C.M."/>
        </authorList>
    </citation>
    <scope>NUCLEOTIDE SEQUENCE [LARGE SCALE GENOMIC DNA]</scope>
    <source>
        <strain>ATCC 27591 / A909 / CDC SS700</strain>
    </source>
</reference>
<dbReference type="EMBL" id="CP000114">
    <property type="protein sequence ID" value="ABA46104.1"/>
    <property type="molecule type" value="Genomic_DNA"/>
</dbReference>
<dbReference type="KEGG" id="sak:SAK_0859"/>
<dbReference type="HOGENOM" id="CLU_123820_0_0_9"/>
<dbReference type="GO" id="GO:0005737">
    <property type="term" value="C:cytoplasm"/>
    <property type="evidence" value="ECO:0007669"/>
    <property type="project" value="UniProtKB-SubCell"/>
</dbReference>
<dbReference type="GO" id="GO:0008270">
    <property type="term" value="F:zinc ion binding"/>
    <property type="evidence" value="ECO:0007669"/>
    <property type="project" value="UniProtKB-UniRule"/>
</dbReference>
<dbReference type="GO" id="GO:0006950">
    <property type="term" value="P:response to stress"/>
    <property type="evidence" value="ECO:0007669"/>
    <property type="project" value="UniProtKB-ARBA"/>
</dbReference>
<dbReference type="HAMAP" id="MF_00745">
    <property type="entry name" value="SprT_like"/>
    <property type="match status" value="1"/>
</dbReference>
<dbReference type="InterPro" id="IPR006640">
    <property type="entry name" value="SprT-like_domain"/>
</dbReference>
<dbReference type="InterPro" id="IPR023524">
    <property type="entry name" value="Uncharacterised_SprT-like"/>
</dbReference>
<dbReference type="NCBIfam" id="NF003339">
    <property type="entry name" value="PRK04351.1"/>
    <property type="match status" value="1"/>
</dbReference>
<dbReference type="Pfam" id="PF10263">
    <property type="entry name" value="SprT-like"/>
    <property type="match status" value="1"/>
</dbReference>
<dbReference type="SMART" id="SM00731">
    <property type="entry name" value="SprT"/>
    <property type="match status" value="1"/>
</dbReference>
<protein>
    <recommendedName>
        <fullName evidence="1">Protein SprT-like</fullName>
    </recommendedName>
</protein>